<reference key="1">
    <citation type="journal article" date="2004" name="Nature">
        <title>Genome sequence of Silicibacter pomeroyi reveals adaptations to the marine environment.</title>
        <authorList>
            <person name="Moran M.A."/>
            <person name="Buchan A."/>
            <person name="Gonzalez J.M."/>
            <person name="Heidelberg J.F."/>
            <person name="Whitman W.B."/>
            <person name="Kiene R.P."/>
            <person name="Henriksen J.R."/>
            <person name="King G.M."/>
            <person name="Belas R."/>
            <person name="Fuqua C."/>
            <person name="Brinkac L.M."/>
            <person name="Lewis M."/>
            <person name="Johri S."/>
            <person name="Weaver B."/>
            <person name="Pai G."/>
            <person name="Eisen J.A."/>
            <person name="Rahe E."/>
            <person name="Sheldon W.M."/>
            <person name="Ye W."/>
            <person name="Miller T.R."/>
            <person name="Carlton J."/>
            <person name="Rasko D.A."/>
            <person name="Paulsen I.T."/>
            <person name="Ren Q."/>
            <person name="Daugherty S.C."/>
            <person name="DeBoy R.T."/>
            <person name="Dodson R.J."/>
            <person name="Durkin A.S."/>
            <person name="Madupu R."/>
            <person name="Nelson W.C."/>
            <person name="Sullivan S.A."/>
            <person name="Rosovitz M.J."/>
            <person name="Haft D.H."/>
            <person name="Selengut J."/>
            <person name="Ward N."/>
        </authorList>
    </citation>
    <scope>NUCLEOTIDE SEQUENCE [LARGE SCALE GENOMIC DNA]</scope>
    <source>
        <strain>ATCC 700808 / DSM 15171 / DSS-3</strain>
    </source>
</reference>
<reference key="2">
    <citation type="journal article" date="2014" name="Stand. Genomic Sci.">
        <title>An updated genome annotation for the model marine bacterium Ruegeria pomeroyi DSS-3.</title>
        <authorList>
            <person name="Rivers A.R."/>
            <person name="Smith C.B."/>
            <person name="Moran M.A."/>
        </authorList>
    </citation>
    <scope>GENOME REANNOTATION</scope>
    <source>
        <strain>ATCC 700808 / DSM 15171 / DSS-3</strain>
    </source>
</reference>
<keyword id="KW-0028">Amino-acid biosynthesis</keyword>
<keyword id="KW-0055">Arginine biosynthesis</keyword>
<keyword id="KW-0963">Cytoplasm</keyword>
<keyword id="KW-1185">Reference proteome</keyword>
<keyword id="KW-0808">Transferase</keyword>
<protein>
    <recommendedName>
        <fullName evidence="2">Ornithine carbamoyltransferase</fullName>
        <shortName evidence="2">OTCase</shortName>
        <ecNumber evidence="2">2.1.3.3</ecNumber>
    </recommendedName>
</protein>
<proteinExistence type="inferred from homology"/>
<dbReference type="EC" id="2.1.3.3" evidence="2"/>
<dbReference type="EMBL" id="CP000031">
    <property type="protein sequence ID" value="AAV94268.1"/>
    <property type="molecule type" value="Genomic_DNA"/>
</dbReference>
<dbReference type="RefSeq" id="WP_011046712.1">
    <property type="nucleotide sequence ID" value="NC_003911.12"/>
</dbReference>
<dbReference type="SMR" id="Q5LUT9"/>
<dbReference type="STRING" id="246200.SPO0963"/>
<dbReference type="PaxDb" id="246200-SPO0963"/>
<dbReference type="KEGG" id="sil:SPO0963"/>
<dbReference type="eggNOG" id="COG0078">
    <property type="taxonomic scope" value="Bacteria"/>
</dbReference>
<dbReference type="HOGENOM" id="CLU_043846_3_2_5"/>
<dbReference type="OrthoDB" id="9802587at2"/>
<dbReference type="UniPathway" id="UPA00068">
    <property type="reaction ID" value="UER00112"/>
</dbReference>
<dbReference type="Proteomes" id="UP000001023">
    <property type="component" value="Chromosome"/>
</dbReference>
<dbReference type="GO" id="GO:0005737">
    <property type="term" value="C:cytoplasm"/>
    <property type="evidence" value="ECO:0007669"/>
    <property type="project" value="UniProtKB-SubCell"/>
</dbReference>
<dbReference type="GO" id="GO:0016597">
    <property type="term" value="F:amino acid binding"/>
    <property type="evidence" value="ECO:0007669"/>
    <property type="project" value="InterPro"/>
</dbReference>
<dbReference type="GO" id="GO:0004585">
    <property type="term" value="F:ornithine carbamoyltransferase activity"/>
    <property type="evidence" value="ECO:0007669"/>
    <property type="project" value="UniProtKB-UniRule"/>
</dbReference>
<dbReference type="GO" id="GO:0042450">
    <property type="term" value="P:arginine biosynthetic process via ornithine"/>
    <property type="evidence" value="ECO:0007669"/>
    <property type="project" value="TreeGrafter"/>
</dbReference>
<dbReference type="GO" id="GO:0019240">
    <property type="term" value="P:citrulline biosynthetic process"/>
    <property type="evidence" value="ECO:0007669"/>
    <property type="project" value="TreeGrafter"/>
</dbReference>
<dbReference type="GO" id="GO:0006526">
    <property type="term" value="P:L-arginine biosynthetic process"/>
    <property type="evidence" value="ECO:0007669"/>
    <property type="project" value="UniProtKB-UniRule"/>
</dbReference>
<dbReference type="FunFam" id="3.40.50.1370:FF:000008">
    <property type="entry name" value="Ornithine carbamoyltransferase"/>
    <property type="match status" value="1"/>
</dbReference>
<dbReference type="Gene3D" id="3.40.50.1370">
    <property type="entry name" value="Aspartate/ornithine carbamoyltransferase"/>
    <property type="match status" value="2"/>
</dbReference>
<dbReference type="HAMAP" id="MF_01109">
    <property type="entry name" value="OTCase"/>
    <property type="match status" value="1"/>
</dbReference>
<dbReference type="InterPro" id="IPR006132">
    <property type="entry name" value="Asp/Orn_carbamoyltranf_P-bd"/>
</dbReference>
<dbReference type="InterPro" id="IPR006130">
    <property type="entry name" value="Asp/Orn_carbamoylTrfase"/>
</dbReference>
<dbReference type="InterPro" id="IPR036901">
    <property type="entry name" value="Asp/Orn_carbamoylTrfase_sf"/>
</dbReference>
<dbReference type="InterPro" id="IPR006131">
    <property type="entry name" value="Asp_carbamoyltransf_Asp/Orn-bd"/>
</dbReference>
<dbReference type="InterPro" id="IPR002292">
    <property type="entry name" value="Orn/put_carbamltrans"/>
</dbReference>
<dbReference type="InterPro" id="IPR024904">
    <property type="entry name" value="OTCase_ArgI"/>
</dbReference>
<dbReference type="NCBIfam" id="TIGR00658">
    <property type="entry name" value="orni_carb_tr"/>
    <property type="match status" value="1"/>
</dbReference>
<dbReference type="NCBIfam" id="NF001986">
    <property type="entry name" value="PRK00779.1"/>
    <property type="match status" value="1"/>
</dbReference>
<dbReference type="PANTHER" id="PTHR45753">
    <property type="entry name" value="ORNITHINE CARBAMOYLTRANSFERASE, MITOCHONDRIAL"/>
    <property type="match status" value="1"/>
</dbReference>
<dbReference type="PANTHER" id="PTHR45753:SF3">
    <property type="entry name" value="ORNITHINE TRANSCARBAMYLASE, MITOCHONDRIAL"/>
    <property type="match status" value="1"/>
</dbReference>
<dbReference type="Pfam" id="PF00185">
    <property type="entry name" value="OTCace"/>
    <property type="match status" value="1"/>
</dbReference>
<dbReference type="Pfam" id="PF02729">
    <property type="entry name" value="OTCace_N"/>
    <property type="match status" value="1"/>
</dbReference>
<dbReference type="PRINTS" id="PR00100">
    <property type="entry name" value="AOTCASE"/>
</dbReference>
<dbReference type="PRINTS" id="PR00102">
    <property type="entry name" value="OTCASE"/>
</dbReference>
<dbReference type="SUPFAM" id="SSF53671">
    <property type="entry name" value="Aspartate/ornithine carbamoyltransferase"/>
    <property type="match status" value="1"/>
</dbReference>
<dbReference type="PROSITE" id="PS00097">
    <property type="entry name" value="CARBAMOYLTRANSFERASE"/>
    <property type="match status" value="1"/>
</dbReference>
<feature type="chain" id="PRO_1000163981" description="Ornithine carbamoyltransferase">
    <location>
        <begin position="1"/>
        <end position="308"/>
    </location>
</feature>
<feature type="binding site" evidence="2">
    <location>
        <begin position="56"/>
        <end position="59"/>
    </location>
    <ligand>
        <name>carbamoyl phosphate</name>
        <dbReference type="ChEBI" id="CHEBI:58228"/>
    </ligand>
</feature>
<feature type="binding site" evidence="2">
    <location>
        <position position="83"/>
    </location>
    <ligand>
        <name>carbamoyl phosphate</name>
        <dbReference type="ChEBI" id="CHEBI:58228"/>
    </ligand>
</feature>
<feature type="binding site" evidence="2">
    <location>
        <position position="107"/>
    </location>
    <ligand>
        <name>carbamoyl phosphate</name>
        <dbReference type="ChEBI" id="CHEBI:58228"/>
    </ligand>
</feature>
<feature type="binding site" evidence="2">
    <location>
        <begin position="134"/>
        <end position="137"/>
    </location>
    <ligand>
        <name>carbamoyl phosphate</name>
        <dbReference type="ChEBI" id="CHEBI:58228"/>
    </ligand>
</feature>
<feature type="binding site" evidence="2">
    <location>
        <position position="165"/>
    </location>
    <ligand>
        <name>L-ornithine</name>
        <dbReference type="ChEBI" id="CHEBI:46911"/>
    </ligand>
</feature>
<feature type="binding site" evidence="2">
    <location>
        <position position="225"/>
    </location>
    <ligand>
        <name>L-ornithine</name>
        <dbReference type="ChEBI" id="CHEBI:46911"/>
    </ligand>
</feature>
<feature type="binding site" evidence="2">
    <location>
        <begin position="229"/>
        <end position="230"/>
    </location>
    <ligand>
        <name>L-ornithine</name>
        <dbReference type="ChEBI" id="CHEBI:46911"/>
    </ligand>
</feature>
<feature type="binding site" evidence="2">
    <location>
        <begin position="266"/>
        <end position="267"/>
    </location>
    <ligand>
        <name>carbamoyl phosphate</name>
        <dbReference type="ChEBI" id="CHEBI:58228"/>
    </ligand>
</feature>
<feature type="binding site" evidence="2">
    <location>
        <position position="294"/>
    </location>
    <ligand>
        <name>carbamoyl phosphate</name>
        <dbReference type="ChEBI" id="CHEBI:58228"/>
    </ligand>
</feature>
<comment type="function">
    <text evidence="1">Reversibly catalyzes the transfer of the carbamoyl group from carbamoyl phosphate (CP) to the N(epsilon) atom of ornithine (ORN) to produce L-citrulline.</text>
</comment>
<comment type="catalytic activity">
    <reaction evidence="2">
        <text>carbamoyl phosphate + L-ornithine = L-citrulline + phosphate + H(+)</text>
        <dbReference type="Rhea" id="RHEA:19513"/>
        <dbReference type="ChEBI" id="CHEBI:15378"/>
        <dbReference type="ChEBI" id="CHEBI:43474"/>
        <dbReference type="ChEBI" id="CHEBI:46911"/>
        <dbReference type="ChEBI" id="CHEBI:57743"/>
        <dbReference type="ChEBI" id="CHEBI:58228"/>
        <dbReference type="EC" id="2.1.3.3"/>
    </reaction>
</comment>
<comment type="pathway">
    <text evidence="2">Amino-acid biosynthesis; L-arginine biosynthesis; L-arginine from L-ornithine and carbamoyl phosphate: step 1/3.</text>
</comment>
<comment type="subcellular location">
    <subcellularLocation>
        <location evidence="2">Cytoplasm</location>
    </subcellularLocation>
</comment>
<comment type="similarity">
    <text evidence="2">Belongs to the aspartate/ornithine carbamoyltransferase superfamily. OTCase family.</text>
</comment>
<name>OTC_RUEPO</name>
<gene>
    <name evidence="2" type="primary">argF</name>
    <name type="ordered locus">SPO0963</name>
</gene>
<organism>
    <name type="scientific">Ruegeria pomeroyi (strain ATCC 700808 / DSM 15171 / DSS-3)</name>
    <name type="common">Silicibacter pomeroyi</name>
    <dbReference type="NCBI Taxonomy" id="246200"/>
    <lineage>
        <taxon>Bacteria</taxon>
        <taxon>Pseudomonadati</taxon>
        <taxon>Pseudomonadota</taxon>
        <taxon>Alphaproteobacteria</taxon>
        <taxon>Rhodobacterales</taxon>
        <taxon>Roseobacteraceae</taxon>
        <taxon>Ruegeria</taxon>
    </lineage>
</organism>
<sequence>MNHFLDIHKTDAADLRAMIDQAGAMKQARLGRPKAAPDDEQPLKDRMVALIFEKPSTRTRVSFDVGVRQMGGQTMVLSGNDMQLGHGETIADTARVLSRYVDMIMIRTFDESVLAEMAEYADVPVINGLTDRSHPCQIMADVLTYEEHRGPIAGKKVVWTGDGNNVCSSFLHAAGQFGFDLTFSGPAQFDPEEEYMGFARQKGSKIVIERDAVKAVEGADLVVADTWVSMHDAQSAKERRHNLLRPYQVNAELMRHAKPDALFMHCLPAHREEEATSEVMDGPHSVIFDEAENRLHAQKAIMRWCLGA</sequence>
<accession>Q5LUT9</accession>
<evidence type="ECO:0000250" key="1"/>
<evidence type="ECO:0000255" key="2">
    <source>
        <dbReference type="HAMAP-Rule" id="MF_01109"/>
    </source>
</evidence>